<dbReference type="EMBL" id="AE016822">
    <property type="protein sequence ID" value="AAT89489.1"/>
    <property type="molecule type" value="Genomic_DNA"/>
</dbReference>
<dbReference type="RefSeq" id="WP_011186477.1">
    <property type="nucleotide sequence ID" value="NC_006087.1"/>
</dbReference>
<dbReference type="SMR" id="Q6ADQ7"/>
<dbReference type="STRING" id="281090.Lxx17300"/>
<dbReference type="KEGG" id="lxx:Lxx17300"/>
<dbReference type="eggNOG" id="COG1825">
    <property type="taxonomic scope" value="Bacteria"/>
</dbReference>
<dbReference type="HOGENOM" id="CLU_075939_1_0_11"/>
<dbReference type="Proteomes" id="UP000001306">
    <property type="component" value="Chromosome"/>
</dbReference>
<dbReference type="GO" id="GO:0022625">
    <property type="term" value="C:cytosolic large ribosomal subunit"/>
    <property type="evidence" value="ECO:0007669"/>
    <property type="project" value="TreeGrafter"/>
</dbReference>
<dbReference type="GO" id="GO:0008097">
    <property type="term" value="F:5S rRNA binding"/>
    <property type="evidence" value="ECO:0007669"/>
    <property type="project" value="InterPro"/>
</dbReference>
<dbReference type="GO" id="GO:0003735">
    <property type="term" value="F:structural constituent of ribosome"/>
    <property type="evidence" value="ECO:0007669"/>
    <property type="project" value="InterPro"/>
</dbReference>
<dbReference type="GO" id="GO:0006412">
    <property type="term" value="P:translation"/>
    <property type="evidence" value="ECO:0007669"/>
    <property type="project" value="UniProtKB-UniRule"/>
</dbReference>
<dbReference type="CDD" id="cd00495">
    <property type="entry name" value="Ribosomal_L25_TL5_CTC"/>
    <property type="match status" value="1"/>
</dbReference>
<dbReference type="Gene3D" id="2.170.120.20">
    <property type="entry name" value="Ribosomal protein L25, beta domain"/>
    <property type="match status" value="1"/>
</dbReference>
<dbReference type="Gene3D" id="2.40.240.10">
    <property type="entry name" value="Ribosomal Protein L25, Chain P"/>
    <property type="match status" value="1"/>
</dbReference>
<dbReference type="HAMAP" id="MF_01334">
    <property type="entry name" value="Ribosomal_bL25_CTC"/>
    <property type="match status" value="1"/>
</dbReference>
<dbReference type="InterPro" id="IPR020056">
    <property type="entry name" value="Rbsml_bL25/Gln-tRNA_synth_N"/>
</dbReference>
<dbReference type="InterPro" id="IPR011035">
    <property type="entry name" value="Ribosomal_bL25/Gln-tRNA_synth"/>
</dbReference>
<dbReference type="InterPro" id="IPR020057">
    <property type="entry name" value="Ribosomal_bL25_b-dom"/>
</dbReference>
<dbReference type="InterPro" id="IPR037121">
    <property type="entry name" value="Ribosomal_bL25_C"/>
</dbReference>
<dbReference type="InterPro" id="IPR001021">
    <property type="entry name" value="Ribosomal_bL25_long"/>
</dbReference>
<dbReference type="InterPro" id="IPR029751">
    <property type="entry name" value="Ribosomal_L25_dom"/>
</dbReference>
<dbReference type="InterPro" id="IPR020930">
    <property type="entry name" value="Ribosomal_uL5_bac-type"/>
</dbReference>
<dbReference type="NCBIfam" id="TIGR00731">
    <property type="entry name" value="bL25_bact_ctc"/>
    <property type="match status" value="1"/>
</dbReference>
<dbReference type="NCBIfam" id="NF004131">
    <property type="entry name" value="PRK05618.2-1"/>
    <property type="match status" value="1"/>
</dbReference>
<dbReference type="PANTHER" id="PTHR33284">
    <property type="entry name" value="RIBOSOMAL PROTEIN L25/GLN-TRNA SYNTHETASE, ANTI-CODON-BINDING DOMAIN-CONTAINING PROTEIN"/>
    <property type="match status" value="1"/>
</dbReference>
<dbReference type="PANTHER" id="PTHR33284:SF1">
    <property type="entry name" value="RIBOSOMAL PROTEIN L25_GLN-TRNA SYNTHETASE, ANTI-CODON-BINDING DOMAIN-CONTAINING PROTEIN"/>
    <property type="match status" value="1"/>
</dbReference>
<dbReference type="Pfam" id="PF01386">
    <property type="entry name" value="Ribosomal_L25p"/>
    <property type="match status" value="1"/>
</dbReference>
<dbReference type="Pfam" id="PF14693">
    <property type="entry name" value="Ribosomal_TL5_C"/>
    <property type="match status" value="1"/>
</dbReference>
<dbReference type="SUPFAM" id="SSF50715">
    <property type="entry name" value="Ribosomal protein L25-like"/>
    <property type="match status" value="1"/>
</dbReference>
<keyword id="KW-1185">Reference proteome</keyword>
<keyword id="KW-0687">Ribonucleoprotein</keyword>
<keyword id="KW-0689">Ribosomal protein</keyword>
<keyword id="KW-0694">RNA-binding</keyword>
<keyword id="KW-0699">rRNA-binding</keyword>
<feature type="chain" id="PRO_0000181560" description="Large ribosomal subunit protein bL25">
    <location>
        <begin position="1"/>
        <end position="200"/>
    </location>
</feature>
<reference key="1">
    <citation type="journal article" date="2004" name="Mol. Plant Microbe Interact.">
        <title>The genome sequence of the Gram-positive sugarcane pathogen Leifsonia xyli subsp. xyli.</title>
        <authorList>
            <person name="Monteiro-Vitorello C.B."/>
            <person name="Camargo L.E.A."/>
            <person name="Van Sluys M.A."/>
            <person name="Kitajima J.P."/>
            <person name="Truffi D."/>
            <person name="do Amaral A.M."/>
            <person name="Harakava R."/>
            <person name="de Oliveira J.C.F."/>
            <person name="Wood D."/>
            <person name="de Oliveira M.C."/>
            <person name="Miyaki C.Y."/>
            <person name="Takita M.A."/>
            <person name="da Silva A.C.R."/>
            <person name="Furlan L.R."/>
            <person name="Carraro D.M."/>
            <person name="Camarotte G."/>
            <person name="Almeida N.F. Jr."/>
            <person name="Carrer H."/>
            <person name="Coutinho L.L."/>
            <person name="El-Dorry H.A."/>
            <person name="Ferro M.I.T."/>
            <person name="Gagliardi P.R."/>
            <person name="Giglioti E."/>
            <person name="Goldman M.H.S."/>
            <person name="Goldman G.H."/>
            <person name="Kimura E.T."/>
            <person name="Ferro E.S."/>
            <person name="Kuramae E.E."/>
            <person name="Lemos E.G.M."/>
            <person name="Lemos M.V.F."/>
            <person name="Mauro S.M.Z."/>
            <person name="Machado M.A."/>
            <person name="Marino C.L."/>
            <person name="Menck C.F."/>
            <person name="Nunes L.R."/>
            <person name="Oliveira R.C."/>
            <person name="Pereira G.G."/>
            <person name="Siqueira W."/>
            <person name="de Souza A.A."/>
            <person name="Tsai S.M."/>
            <person name="Zanca A.S."/>
            <person name="Simpson A.J.G."/>
            <person name="Brumbley S.M."/>
            <person name="Setubal J.C."/>
        </authorList>
    </citation>
    <scope>NUCLEOTIDE SEQUENCE [LARGE SCALE GENOMIC DNA]</scope>
    <source>
        <strain>CTCB07</strain>
    </source>
</reference>
<name>RL25_LEIXX</name>
<sequence>MADESNKVAAEVRDSFGKGAARKIRAAGKIPAVIYGHGSEPVHITLPAHQVGLLLRKANAVLDIDIAGKTQLALVKDVQKDPVLQIIEHLDLLVVRRGEKVQVEVPVHVEGEPFSGTIAMLDIPTIKLEVEATNIPERIVIDVTGAEEGTQYHAKDFALPAGAVLAEDEDLLLLNIIVPAAARAEDEEAVVEAAGDQAAE</sequence>
<accession>Q6ADQ7</accession>
<evidence type="ECO:0000255" key="1">
    <source>
        <dbReference type="HAMAP-Rule" id="MF_01334"/>
    </source>
</evidence>
<evidence type="ECO:0000305" key="2"/>
<proteinExistence type="inferred from homology"/>
<gene>
    <name evidence="1" type="primary">rplY</name>
    <name evidence="1" type="synonym">ctc</name>
    <name type="ordered locus">Lxx17300</name>
</gene>
<protein>
    <recommendedName>
        <fullName evidence="1">Large ribosomal subunit protein bL25</fullName>
    </recommendedName>
    <alternativeName>
        <fullName evidence="2">50S ribosomal protein L25</fullName>
    </alternativeName>
    <alternativeName>
        <fullName evidence="1">General stress protein CTC</fullName>
    </alternativeName>
</protein>
<comment type="function">
    <text evidence="1">This is one of the proteins that binds to the 5S RNA in the ribosome where it forms part of the central protuberance.</text>
</comment>
<comment type="subunit">
    <text evidence="1">Part of the 50S ribosomal subunit; part of the 5S rRNA/L5/L18/L25 subcomplex. Contacts the 5S rRNA. Binds to the 5S rRNA independently of L5 and L18.</text>
</comment>
<comment type="similarity">
    <text evidence="1">Belongs to the bacterial ribosomal protein bL25 family. CTC subfamily.</text>
</comment>
<organism>
    <name type="scientific">Leifsonia xyli subsp. xyli (strain CTCB07)</name>
    <dbReference type="NCBI Taxonomy" id="281090"/>
    <lineage>
        <taxon>Bacteria</taxon>
        <taxon>Bacillati</taxon>
        <taxon>Actinomycetota</taxon>
        <taxon>Actinomycetes</taxon>
        <taxon>Micrococcales</taxon>
        <taxon>Microbacteriaceae</taxon>
        <taxon>Leifsonia</taxon>
    </lineage>
</organism>